<gene>
    <name type="ordered locus">RD1_0126</name>
</gene>
<sequence>MTRTLAVVLAMTFSAAPVFAEGDIEAGEKAFNKCKSCHQIVSDAGEEIVKGGRTGPNLYGVLGRQAGTADFRYGDDLVAAGEAGLVWDADNFVEYVTDPRAFLRAYLDDSKAKSKMAYKLRSGGEDIAAYLASVSGSSS</sequence>
<keyword id="KW-0903">Direct protein sequencing</keyword>
<keyword id="KW-0249">Electron transport</keyword>
<keyword id="KW-0349">Heme</keyword>
<keyword id="KW-0408">Iron</keyword>
<keyword id="KW-0479">Metal-binding</keyword>
<keyword id="KW-1185">Reference proteome</keyword>
<keyword id="KW-0732">Signal</keyword>
<keyword id="KW-0813">Transport</keyword>
<proteinExistence type="evidence at protein level"/>
<name>CY551_ROSDO</name>
<evidence type="ECO:0000269" key="1">
    <source>
    </source>
</evidence>
<evidence type="ECO:0000305" key="2"/>
<protein>
    <recommendedName>
        <fullName>Cytochrome c-551</fullName>
    </recommendedName>
    <alternativeName>
        <fullName>Cytochrome c551</fullName>
    </alternativeName>
</protein>
<feature type="signal peptide" evidence="1">
    <location>
        <begin position="1"/>
        <end position="20"/>
    </location>
</feature>
<feature type="chain" id="PRO_0000108394" description="Cytochrome c-551">
    <location>
        <begin position="21"/>
        <end position="139"/>
    </location>
</feature>
<feature type="binding site" description="covalent">
    <location>
        <position position="34"/>
    </location>
    <ligand>
        <name>heme c</name>
        <dbReference type="ChEBI" id="CHEBI:61717"/>
    </ligand>
</feature>
<feature type="binding site" description="covalent">
    <location>
        <position position="37"/>
    </location>
    <ligand>
        <name>heme c</name>
        <dbReference type="ChEBI" id="CHEBI:61717"/>
    </ligand>
</feature>
<feature type="binding site" description="axial binding residue">
    <location>
        <position position="38"/>
    </location>
    <ligand>
        <name>heme c</name>
        <dbReference type="ChEBI" id="CHEBI:61717"/>
    </ligand>
    <ligandPart>
        <name>Fe</name>
        <dbReference type="ChEBI" id="CHEBI:18248"/>
    </ligandPart>
</feature>
<feature type="binding site" description="axial binding residue">
    <location>
        <position position="116"/>
    </location>
    <ligand>
        <name>heme c</name>
        <dbReference type="ChEBI" id="CHEBI:61717"/>
    </ligand>
    <ligandPart>
        <name>Fe</name>
        <dbReference type="ChEBI" id="CHEBI:18248"/>
    </ligandPart>
</feature>
<organism>
    <name type="scientific">Roseobacter denitrificans (strain ATCC 33942 / OCh 114)</name>
    <name type="common">Erythrobacter sp. (strain OCh 114)</name>
    <name type="synonym">Roseobacter denitrificans</name>
    <dbReference type="NCBI Taxonomy" id="375451"/>
    <lineage>
        <taxon>Bacteria</taxon>
        <taxon>Pseudomonadati</taxon>
        <taxon>Pseudomonadota</taxon>
        <taxon>Alphaproteobacteria</taxon>
        <taxon>Rhodobacterales</taxon>
        <taxon>Roseobacteraceae</taxon>
        <taxon>Roseobacter</taxon>
    </lineage>
</organism>
<reference key="1">
    <citation type="journal article" date="2007" name="J. Bacteriol.">
        <title>The complete genome sequence of Roseobacter denitrificans reveals a mixotrophic rather than photosynthetic metabolism.</title>
        <authorList>
            <person name="Swingley W.D."/>
            <person name="Sadekar S."/>
            <person name="Mastrian S.D."/>
            <person name="Matthies H.J."/>
            <person name="Hao J."/>
            <person name="Ramos H."/>
            <person name="Acharya C.R."/>
            <person name="Conrad A.L."/>
            <person name="Taylor H.L."/>
            <person name="Dejesa L.C."/>
            <person name="Shah M.K."/>
            <person name="O'Huallachain M.E."/>
            <person name="Lince M.T."/>
            <person name="Blankenship R.E."/>
            <person name="Beatty J.T."/>
            <person name="Touchman J.W."/>
        </authorList>
    </citation>
    <scope>NUCLEOTIDE SEQUENCE [LARGE SCALE GENOMIC DNA]</scope>
    <source>
        <strain>ATCC 33942 / OCh 114</strain>
    </source>
</reference>
<reference key="2">
    <citation type="journal article" date="1987" name="J. Biochem.">
        <title>Complete amino acid sequence of cytochrome c551 from Erythrobacter species strain OCh 114.</title>
        <authorList>
            <person name="Okamura K."/>
            <person name="Miyata T."/>
            <person name="Iwanaga S."/>
            <person name="Takamiya K."/>
            <person name="Nishimura M."/>
        </authorList>
    </citation>
    <scope>PROTEIN SEQUENCE OF 21-139</scope>
</reference>
<comment type="PTM">
    <text>Binds 1 heme c group covalently per subunit.</text>
</comment>
<comment type="similarity">
    <text evidence="2">Belongs to the cytochrome c family.</text>
</comment>
<accession>P07625</accession>
<accession>Q16DT2</accession>
<dbReference type="EMBL" id="CP000362">
    <property type="protein sequence ID" value="ABG29861.1"/>
    <property type="molecule type" value="Genomic_DNA"/>
</dbReference>
<dbReference type="PIR" id="JT0008">
    <property type="entry name" value="CCBC5E"/>
</dbReference>
<dbReference type="RefSeq" id="WP_011566483.1">
    <property type="nucleotide sequence ID" value="NC_008209.1"/>
</dbReference>
<dbReference type="SMR" id="P07625"/>
<dbReference type="STRING" id="375451.RD1_0126"/>
<dbReference type="KEGG" id="rde:RD1_0126"/>
<dbReference type="eggNOG" id="COG3474">
    <property type="taxonomic scope" value="Bacteria"/>
</dbReference>
<dbReference type="HOGENOM" id="CLU_060944_1_0_5"/>
<dbReference type="OrthoDB" id="9805828at2"/>
<dbReference type="Proteomes" id="UP000007029">
    <property type="component" value="Chromosome"/>
</dbReference>
<dbReference type="GO" id="GO:0009055">
    <property type="term" value="F:electron transfer activity"/>
    <property type="evidence" value="ECO:0007669"/>
    <property type="project" value="InterPro"/>
</dbReference>
<dbReference type="GO" id="GO:0020037">
    <property type="term" value="F:heme binding"/>
    <property type="evidence" value="ECO:0007669"/>
    <property type="project" value="InterPro"/>
</dbReference>
<dbReference type="GO" id="GO:0046872">
    <property type="term" value="F:metal ion binding"/>
    <property type="evidence" value="ECO:0007669"/>
    <property type="project" value="UniProtKB-KW"/>
</dbReference>
<dbReference type="Gene3D" id="1.10.760.10">
    <property type="entry name" value="Cytochrome c-like domain"/>
    <property type="match status" value="1"/>
</dbReference>
<dbReference type="InterPro" id="IPR009056">
    <property type="entry name" value="Cyt_c-like_dom"/>
</dbReference>
<dbReference type="InterPro" id="IPR036909">
    <property type="entry name" value="Cyt_c-like_dom_sf"/>
</dbReference>
<dbReference type="SUPFAM" id="SSF46626">
    <property type="entry name" value="Cytochrome c"/>
    <property type="match status" value="1"/>
</dbReference>
<dbReference type="PROSITE" id="PS51007">
    <property type="entry name" value="CYTC"/>
    <property type="match status" value="1"/>
</dbReference>